<dbReference type="EMBL" id="M25369">
    <property type="protein sequence ID" value="AAA43555.1"/>
    <property type="molecule type" value="Genomic_RNA"/>
</dbReference>
<dbReference type="PIR" id="A32662">
    <property type="entry name" value="MNIVA1"/>
</dbReference>
<dbReference type="SMR" id="P13142"/>
<dbReference type="GO" id="GO:0030430">
    <property type="term" value="C:host cell cytoplasm"/>
    <property type="evidence" value="ECO:0007669"/>
    <property type="project" value="UniProtKB-SubCell"/>
</dbReference>
<dbReference type="GO" id="GO:0042025">
    <property type="term" value="C:host cell nucleus"/>
    <property type="evidence" value="ECO:0007669"/>
    <property type="project" value="UniProtKB-SubCell"/>
</dbReference>
<dbReference type="GO" id="GO:0030291">
    <property type="term" value="F:protein serine/threonine kinase inhibitor activity"/>
    <property type="evidence" value="ECO:0007669"/>
    <property type="project" value="UniProtKB-KW"/>
</dbReference>
<dbReference type="GO" id="GO:0003723">
    <property type="term" value="F:RNA binding"/>
    <property type="evidence" value="ECO:0007669"/>
    <property type="project" value="UniProtKB-KW"/>
</dbReference>
<dbReference type="GO" id="GO:0039540">
    <property type="term" value="P:symbiont-mediated suppression of host cytoplasmic pattern recognition receptor signaling pathway via inhibition of RIG-I activity"/>
    <property type="evidence" value="ECO:0007669"/>
    <property type="project" value="UniProtKB-KW"/>
</dbReference>
<dbReference type="GO" id="GO:0039657">
    <property type="term" value="P:symbiont-mediated suppression of host gene expression"/>
    <property type="evidence" value="ECO:0007669"/>
    <property type="project" value="UniProtKB-KW"/>
</dbReference>
<dbReference type="GO" id="GO:0039524">
    <property type="term" value="P:symbiont-mediated suppression of host mRNA processing"/>
    <property type="evidence" value="ECO:0007669"/>
    <property type="project" value="UniProtKB-KW"/>
</dbReference>
<dbReference type="GO" id="GO:0039580">
    <property type="term" value="P:symbiont-mediated suppression of host PKR/eIFalpha signaling"/>
    <property type="evidence" value="ECO:0007669"/>
    <property type="project" value="UniProtKB-KW"/>
</dbReference>
<dbReference type="GO" id="GO:0039502">
    <property type="term" value="P:symbiont-mediated suppression of host type I interferon-mediated signaling pathway"/>
    <property type="evidence" value="ECO:0007669"/>
    <property type="project" value="UniProtKB-KW"/>
</dbReference>
<dbReference type="FunFam" id="1.10.287.10:FF:000001">
    <property type="entry name" value="Non-structural protein 1"/>
    <property type="match status" value="1"/>
</dbReference>
<dbReference type="FunFam" id="3.30.420.330:FF:000001">
    <property type="entry name" value="Non-structural protein 1"/>
    <property type="match status" value="1"/>
</dbReference>
<dbReference type="Gene3D" id="3.30.420.330">
    <property type="entry name" value="Influenza virus non-structural protein, effector domain"/>
    <property type="match status" value="1"/>
</dbReference>
<dbReference type="Gene3D" id="1.10.287.10">
    <property type="entry name" value="S15/NS1, RNA-binding"/>
    <property type="match status" value="1"/>
</dbReference>
<dbReference type="HAMAP" id="MF_04066">
    <property type="entry name" value="INFV_NS1"/>
    <property type="match status" value="1"/>
</dbReference>
<dbReference type="InterPro" id="IPR004208">
    <property type="entry name" value="NS1"/>
</dbReference>
<dbReference type="InterPro" id="IPR000256">
    <property type="entry name" value="NS1A"/>
</dbReference>
<dbReference type="InterPro" id="IPR038064">
    <property type="entry name" value="NS1A_effect_dom-like_sf"/>
</dbReference>
<dbReference type="InterPro" id="IPR009068">
    <property type="entry name" value="uS15_NS1_RNA-bd_sf"/>
</dbReference>
<dbReference type="Pfam" id="PF00600">
    <property type="entry name" value="Flu_NS1"/>
    <property type="match status" value="1"/>
</dbReference>
<dbReference type="SUPFAM" id="SSF143021">
    <property type="entry name" value="Ns1 effector domain-like"/>
    <property type="match status" value="1"/>
</dbReference>
<dbReference type="SUPFAM" id="SSF47060">
    <property type="entry name" value="S15/NS1 RNA-binding domain"/>
    <property type="match status" value="1"/>
</dbReference>
<accession>P13142</accession>
<keyword id="KW-0025">Alternative splicing</keyword>
<keyword id="KW-1262">Eukaryotic host gene expression shutoff by virus</keyword>
<keyword id="KW-1035">Host cytoplasm</keyword>
<keyword id="KW-1190">Host gene expression shutoff by virus</keyword>
<keyword id="KW-1192">Host mRNA suppression by virus</keyword>
<keyword id="KW-1048">Host nucleus</keyword>
<keyword id="KW-0945">Host-virus interaction</keyword>
<keyword id="KW-1090">Inhibition of host innate immune response by virus</keyword>
<keyword id="KW-1114">Inhibition of host interferon signaling pathway by virus</keyword>
<keyword id="KW-1102">Inhibition of host PKR by virus</keyword>
<keyword id="KW-1103">Inhibition of host pre-mRNA processing by virus</keyword>
<keyword id="KW-1088">Inhibition of host RIG-I by virus</keyword>
<keyword id="KW-1113">Inhibition of host RLR pathway by virus</keyword>
<keyword id="KW-0922">Interferon antiviral system evasion</keyword>
<keyword id="KW-0694">RNA-binding</keyword>
<keyword id="KW-0832">Ubl conjugation</keyword>
<keyword id="KW-0899">Viral immunoevasion</keyword>
<organism>
    <name type="scientific">Influenza A virus (strain A/Pintail/Alberta/268/1978 H6N2)</name>
    <dbReference type="NCBI Taxonomy" id="11451"/>
    <lineage>
        <taxon>Viruses</taxon>
        <taxon>Riboviria</taxon>
        <taxon>Orthornavirae</taxon>
        <taxon>Negarnaviricota</taxon>
        <taxon>Polyploviricotina</taxon>
        <taxon>Insthoviricetes</taxon>
        <taxon>Articulavirales</taxon>
        <taxon>Orthomyxoviridae</taxon>
        <taxon>Alphainfluenzavirus</taxon>
        <taxon>Alphainfluenzavirus influenzae</taxon>
        <taxon>Influenza A virus</taxon>
    </lineage>
</organism>
<protein>
    <recommendedName>
        <fullName evidence="1">Non-structural protein 1</fullName>
        <shortName evidence="1">NS1</shortName>
    </recommendedName>
    <alternativeName>
        <fullName evidence="1">NS1A</fullName>
    </alternativeName>
</protein>
<proteinExistence type="inferred from homology"/>
<comment type="function">
    <text evidence="1">Inhibits post-transcriptional processing of cellular pre-mRNA, by binding and inhibiting two cellular proteins that are required for the 3'-end processing of cellular pre-mRNAs: the 30 kDa cleavage and polyadenylation specificity factor/CPSF4 and the poly(A)-binding protein 2/PABPN1. In turn, unprocessed 3' end pre-mRNAs accumulate in the host nucleus and are no longer exported to the cytoplasm. Cellular protein synthesis is thereby shut off very early after virus infection. Viral protein synthesis is not affected by the inhibition of the cellular 3' end processing machinery because the poly(A) tails of viral mRNAs are produced by the viral polymerase through a stuttering mechanism. Prevents the establishment of the cellular antiviral state by inhibiting TRIM25-mediated RIGI ubiquitination, which normally triggers the antiviral transduction signal that leads to the activation of type I IFN genes by transcription factors IRF3 and IRF7. Also binds poly(A) and U6 snRNA. Inhibits the integrated stress response (ISR) in the infected cell by blocking dsRNA binding by EIF2AK2/PKR and further phosphorylation of EIF2S1/EIF-2ALPHA. Stress granule formation is thus inhibited, which allows protein synthesis and viral replication.</text>
</comment>
<comment type="subunit">
    <text evidence="1">Homodimer. Interacts with host TRIM25 (via coiled coil); this interaction specifically inhibits TRIM25 multimerization and TRIM25-mediated RIGI CARD ubiquitination. Interacts with human EIF2AK2/PKR, CPSF4, IVNS1ABP and PABPN1.</text>
</comment>
<comment type="subcellular location">
    <subcellularLocation>
        <location evidence="1">Host nucleus</location>
    </subcellularLocation>
    <subcellularLocation>
        <location evidence="1">Host cytoplasm</location>
    </subcellularLocation>
    <text evidence="1">In uninfected, transfected cells, NS1 is localized in the nucleus. Only in virus infected cells, the nuclear export signal is unveiled, presumably by a viral protein, and a fraction of NS1 is exported in the cytoplasm.</text>
</comment>
<comment type="alternative products">
    <event type="alternative splicing"/>
    <isoform>
        <id>P13142-1</id>
        <name>NS1</name>
        <sequence type="displayed"/>
    </isoform>
    <isoform>
        <id>P13150-1</id>
        <name>NEP</name>
        <name>NS2</name>
        <sequence type="external"/>
    </isoform>
</comment>
<comment type="domain">
    <text evidence="1">The dsRNA-binding region is required for suppression of RNA silencing.</text>
</comment>
<comment type="PTM">
    <text evidence="1">Upon interferon induction, ISGylated via host HERC5; this results in the impairment of NS1 interaction with RNA targets due to its inability to form homodimers and to interact with host EIF2AK2/PKR.</text>
</comment>
<comment type="similarity">
    <text evidence="1">Belongs to the influenza A viruses NS1 family.</text>
</comment>
<feature type="chain" id="PRO_0000078943" description="Non-structural protein 1">
    <location>
        <begin position="1"/>
        <end position="230"/>
    </location>
</feature>
<feature type="region of interest" description="RNA-binding and homodimerization" evidence="1">
    <location>
        <begin position="1"/>
        <end position="73"/>
    </location>
</feature>
<feature type="region of interest" description="CPSF4-binding" evidence="1">
    <location>
        <begin position="180"/>
        <end position="215"/>
    </location>
</feature>
<feature type="region of interest" description="Disordered" evidence="2">
    <location>
        <begin position="205"/>
        <end position="230"/>
    </location>
</feature>
<feature type="region of interest" description="PABPN1-binding" evidence="1">
    <location>
        <begin position="223"/>
        <end position="230"/>
    </location>
</feature>
<feature type="short sequence motif" description="Nuclear localization signal" evidence="1">
    <location>
        <begin position="34"/>
        <end position="38"/>
    </location>
</feature>
<feature type="short sequence motif" description="Nuclear export signal" evidence="1">
    <location>
        <begin position="137"/>
        <end position="146"/>
    </location>
</feature>
<sequence length="230" mass="26105">MDSNTVSSFQVDCFLWHVRKRFADQELGDAPFLDRLRRDQKSLRGRGSTLGLDMETATRAGKQIVERILEEESDEALKMTIASVPASRYLTDMTLEEMSRDWFMLMPKQKVAGSLCIRMDQAIMDKNIILKANFSVIFDRLETLILLRAFTEEGAIVGEISPLPSLPGHTDEDVKNAIGVLIGGLEWNDNTVRLSETLQRFAWRSSNEDGRPPLPSKQKRKMARTIESEV</sequence>
<organismHost>
    <name type="scientific">Aves</name>
    <dbReference type="NCBI Taxonomy" id="8782"/>
</organismHost>
<evidence type="ECO:0000255" key="1">
    <source>
        <dbReference type="HAMAP-Rule" id="MF_04066"/>
    </source>
</evidence>
<evidence type="ECO:0000256" key="2">
    <source>
        <dbReference type="SAM" id="MobiDB-lite"/>
    </source>
</evidence>
<reference key="1">
    <citation type="journal article" date="1989" name="Virology">
        <title>The B allele of the NS gene of avian influenza viruses, but not the A allele, attenuates a human influenza A virus for squirrel monkeys.</title>
        <authorList>
            <person name="Treanor J.J."/>
            <person name="Snyder M.H."/>
            <person name="London W.T."/>
            <person name="Murphy B.R."/>
        </authorList>
    </citation>
    <scope>NUCLEOTIDE SEQUENCE [GENOMIC RNA]</scope>
</reference>
<reference key="2">
    <citation type="journal article" date="2003" name="Virology">
        <title>Intracellular warfare between human influenza viruses and human cells: the roles of the viral NS1 protein.</title>
        <authorList>
            <person name="Krug R.M."/>
            <person name="Yuan W."/>
            <person name="Noah D.L."/>
            <person name="Latham A.G."/>
        </authorList>
    </citation>
    <scope>REVIEW</scope>
</reference>
<gene>
    <name evidence="1" type="primary">NS</name>
</gene>
<name>NS1_I78AA</name>